<keyword id="KW-1185">Reference proteome</keyword>
<keyword id="KW-0687">Ribonucleoprotein</keyword>
<keyword id="KW-0689">Ribosomal protein</keyword>
<keyword id="KW-0694">RNA-binding</keyword>
<keyword id="KW-0699">rRNA-binding</keyword>
<keyword id="KW-0820">tRNA-binding</keyword>
<proteinExistence type="inferred from homology"/>
<comment type="function">
    <text evidence="1">One of the primary rRNA binding proteins, it binds directly to 16S rRNA where it nucleates assembly of the head domain of the 30S subunit. Is located at the subunit interface close to the decoding center, probably blocks exit of the E-site tRNA.</text>
</comment>
<comment type="subunit">
    <text evidence="1">Part of the 30S ribosomal subunit. Contacts proteins S9 and S11.</text>
</comment>
<comment type="similarity">
    <text evidence="1">Belongs to the universal ribosomal protein uS7 family.</text>
</comment>
<feature type="chain" id="PRO_1000014222" description="Small ribosomal subunit protein uS7">
    <location>
        <begin position="1"/>
        <end position="156"/>
    </location>
</feature>
<accession>A0L5W9</accession>
<dbReference type="EMBL" id="CP000471">
    <property type="protein sequence ID" value="ABK43362.1"/>
    <property type="molecule type" value="Genomic_DNA"/>
</dbReference>
<dbReference type="RefSeq" id="WP_011712522.1">
    <property type="nucleotide sequence ID" value="NC_008576.1"/>
</dbReference>
<dbReference type="SMR" id="A0L5W9"/>
<dbReference type="STRING" id="156889.Mmc1_0843"/>
<dbReference type="KEGG" id="mgm:Mmc1_0843"/>
<dbReference type="eggNOG" id="COG0049">
    <property type="taxonomic scope" value="Bacteria"/>
</dbReference>
<dbReference type="HOGENOM" id="CLU_072226_1_1_5"/>
<dbReference type="OrthoDB" id="9807653at2"/>
<dbReference type="Proteomes" id="UP000002586">
    <property type="component" value="Chromosome"/>
</dbReference>
<dbReference type="GO" id="GO:0015935">
    <property type="term" value="C:small ribosomal subunit"/>
    <property type="evidence" value="ECO:0007669"/>
    <property type="project" value="InterPro"/>
</dbReference>
<dbReference type="GO" id="GO:0019843">
    <property type="term" value="F:rRNA binding"/>
    <property type="evidence" value="ECO:0007669"/>
    <property type="project" value="UniProtKB-UniRule"/>
</dbReference>
<dbReference type="GO" id="GO:0003735">
    <property type="term" value="F:structural constituent of ribosome"/>
    <property type="evidence" value="ECO:0007669"/>
    <property type="project" value="InterPro"/>
</dbReference>
<dbReference type="GO" id="GO:0000049">
    <property type="term" value="F:tRNA binding"/>
    <property type="evidence" value="ECO:0007669"/>
    <property type="project" value="UniProtKB-UniRule"/>
</dbReference>
<dbReference type="GO" id="GO:0006412">
    <property type="term" value="P:translation"/>
    <property type="evidence" value="ECO:0007669"/>
    <property type="project" value="UniProtKB-UniRule"/>
</dbReference>
<dbReference type="CDD" id="cd14869">
    <property type="entry name" value="uS7_Bacteria"/>
    <property type="match status" value="1"/>
</dbReference>
<dbReference type="FunFam" id="1.10.455.10:FF:000001">
    <property type="entry name" value="30S ribosomal protein S7"/>
    <property type="match status" value="1"/>
</dbReference>
<dbReference type="Gene3D" id="1.10.455.10">
    <property type="entry name" value="Ribosomal protein S7 domain"/>
    <property type="match status" value="1"/>
</dbReference>
<dbReference type="HAMAP" id="MF_00480_B">
    <property type="entry name" value="Ribosomal_uS7_B"/>
    <property type="match status" value="1"/>
</dbReference>
<dbReference type="InterPro" id="IPR000235">
    <property type="entry name" value="Ribosomal_uS7"/>
</dbReference>
<dbReference type="InterPro" id="IPR005717">
    <property type="entry name" value="Ribosomal_uS7_bac/org-type"/>
</dbReference>
<dbReference type="InterPro" id="IPR020606">
    <property type="entry name" value="Ribosomal_uS7_CS"/>
</dbReference>
<dbReference type="InterPro" id="IPR023798">
    <property type="entry name" value="Ribosomal_uS7_dom"/>
</dbReference>
<dbReference type="InterPro" id="IPR036823">
    <property type="entry name" value="Ribosomal_uS7_dom_sf"/>
</dbReference>
<dbReference type="NCBIfam" id="TIGR01029">
    <property type="entry name" value="rpsG_bact"/>
    <property type="match status" value="1"/>
</dbReference>
<dbReference type="PANTHER" id="PTHR11205">
    <property type="entry name" value="RIBOSOMAL PROTEIN S7"/>
    <property type="match status" value="1"/>
</dbReference>
<dbReference type="Pfam" id="PF00177">
    <property type="entry name" value="Ribosomal_S7"/>
    <property type="match status" value="1"/>
</dbReference>
<dbReference type="PIRSF" id="PIRSF002122">
    <property type="entry name" value="RPS7p_RPS7a_RPS5e_RPS7o"/>
    <property type="match status" value="1"/>
</dbReference>
<dbReference type="SUPFAM" id="SSF47973">
    <property type="entry name" value="Ribosomal protein S7"/>
    <property type="match status" value="1"/>
</dbReference>
<dbReference type="PROSITE" id="PS00052">
    <property type="entry name" value="RIBOSOMAL_S7"/>
    <property type="match status" value="1"/>
</dbReference>
<reference key="1">
    <citation type="journal article" date="2009" name="Appl. Environ. Microbiol.">
        <title>Complete genome sequence of the chemolithoautotrophic marine magnetotactic coccus strain MC-1.</title>
        <authorList>
            <person name="Schubbe S."/>
            <person name="Williams T.J."/>
            <person name="Xie G."/>
            <person name="Kiss H.E."/>
            <person name="Brettin T.S."/>
            <person name="Martinez D."/>
            <person name="Ross C.A."/>
            <person name="Schuler D."/>
            <person name="Cox B.L."/>
            <person name="Nealson K.H."/>
            <person name="Bazylinski D.A."/>
        </authorList>
    </citation>
    <scope>NUCLEOTIDE SEQUENCE [LARGE SCALE GENOMIC DNA]</scope>
    <source>
        <strain>ATCC BAA-1437 / JCM 17883 / MC-1</strain>
    </source>
</reference>
<organism>
    <name type="scientific">Magnetococcus marinus (strain ATCC BAA-1437 / JCM 17883 / MC-1)</name>
    <dbReference type="NCBI Taxonomy" id="156889"/>
    <lineage>
        <taxon>Bacteria</taxon>
        <taxon>Pseudomonadati</taxon>
        <taxon>Pseudomonadota</taxon>
        <taxon>Alphaproteobacteria</taxon>
        <taxon>Magnetococcales</taxon>
        <taxon>Magnetococcaceae</taxon>
        <taxon>Magnetococcus</taxon>
    </lineage>
</organism>
<protein>
    <recommendedName>
        <fullName evidence="1">Small ribosomal subunit protein uS7</fullName>
    </recommendedName>
    <alternativeName>
        <fullName evidence="2">30S ribosomal protein S7</fullName>
    </alternativeName>
</protein>
<sequence>MSRRREVPKREVIPDARYNDKLVAKFMNCLMVDGKKSLAERVFYGAFDLIEQRTKEDPIKVFKEAVDNVRPTLEVRSRRVGGANYQVPVEVRPVRRQTLAIRWLIGYARSRGEKTMRERLAAELIEASQGRGATIKKRDDTHRMAEANKVFAHYRW</sequence>
<evidence type="ECO:0000255" key="1">
    <source>
        <dbReference type="HAMAP-Rule" id="MF_00480"/>
    </source>
</evidence>
<evidence type="ECO:0000305" key="2"/>
<gene>
    <name evidence="1" type="primary">rpsG</name>
    <name type="ordered locus">Mmc1_0843</name>
</gene>
<name>RS7_MAGMM</name>